<proteinExistence type="inferred from homology"/>
<accession>Q35639</accession>
<reference key="1">
    <citation type="journal article" date="1992" name="Biochem. Genet.">
        <title>Both chloroplast and mitochondrial NADH dehydrogenase subunit 5 genes are transcribed in pea.</title>
        <authorList>
            <person name="Park J."/>
            <person name="Breitenberger C."/>
        </authorList>
    </citation>
    <scope>NUCLEOTIDE SEQUENCE [GENOMIC DNA]</scope>
    <source>
        <strain>cv. Progress No. 9</strain>
    </source>
</reference>
<sequence length="183" mass="19860">DPHSPRFMCYLSILTFFMPMLVTGDNSLQLFLGWEGVGLASYLLIHFWFTRLQADKAATKAMPVNRVGDFGLAPGISGRFTLFQTVDFSTIFARASAPRNSWISCNMRLNAITLICILLLIGAVGKSAQIGSHTWSPDAMEGPTPVSALIHAATMVTAGVFMIARCSPLFEYPPTALIVITSA</sequence>
<protein>
    <recommendedName>
        <fullName>NADH-ubiquinone oxidoreductase chain 5</fullName>
        <ecNumber>7.1.1.2</ecNumber>
    </recommendedName>
    <alternativeName>
        <fullName>NADH dehydrogenase subunit 5</fullName>
    </alternativeName>
</protein>
<gene>
    <name type="primary">NDH5</name>
</gene>
<feature type="chain" id="PRO_0000118127" description="NADH-ubiquinone oxidoreductase chain 5">
    <location>
        <begin position="1" status="less than"/>
        <end position="183" status="greater than"/>
    </location>
</feature>
<feature type="transmembrane region" description="Helical" evidence="2">
    <location>
        <begin position="7"/>
        <end position="27"/>
    </location>
</feature>
<feature type="transmembrane region" description="Helical" evidence="2">
    <location>
        <begin position="30"/>
        <end position="50"/>
    </location>
</feature>
<feature type="transmembrane region" description="Helical" evidence="2">
    <location>
        <begin position="111"/>
        <end position="131"/>
    </location>
</feature>
<feature type="transmembrane region" description="Helical" evidence="2">
    <location>
        <begin position="144"/>
        <end position="164"/>
    </location>
</feature>
<feature type="non-terminal residue">
    <location>
        <position position="1"/>
    </location>
</feature>
<feature type="non-terminal residue">
    <location>
        <position position="183"/>
    </location>
</feature>
<comment type="function">
    <text evidence="1">Core subunit of the mitochondrial membrane respiratory chain NADH dehydrogenase (Complex I) that is believed to belong to the minimal assembly required for catalysis. Complex I functions in the transfer of electrons from NADH to the respiratory chain. The immediate electron acceptor for the enzyme is believed to be ubiquinone (By similarity).</text>
</comment>
<comment type="catalytic activity">
    <reaction>
        <text>a ubiquinone + NADH + 5 H(+)(in) = a ubiquinol + NAD(+) + 4 H(+)(out)</text>
        <dbReference type="Rhea" id="RHEA:29091"/>
        <dbReference type="Rhea" id="RHEA-COMP:9565"/>
        <dbReference type="Rhea" id="RHEA-COMP:9566"/>
        <dbReference type="ChEBI" id="CHEBI:15378"/>
        <dbReference type="ChEBI" id="CHEBI:16389"/>
        <dbReference type="ChEBI" id="CHEBI:17976"/>
        <dbReference type="ChEBI" id="CHEBI:57540"/>
        <dbReference type="ChEBI" id="CHEBI:57945"/>
        <dbReference type="EC" id="7.1.1.2"/>
    </reaction>
</comment>
<comment type="subcellular location">
    <subcellularLocation>
        <location evidence="1">Mitochondrion inner membrane</location>
        <topology evidence="1">Multi-pass membrane protein</topology>
    </subcellularLocation>
</comment>
<comment type="similarity">
    <text evidence="3">Belongs to the complex I subunit 5 family.</text>
</comment>
<dbReference type="EC" id="7.1.1.2"/>
<dbReference type="EMBL" id="M57478">
    <property type="protein sequence ID" value="AAA70295.1"/>
    <property type="molecule type" value="Genomic_DNA"/>
</dbReference>
<dbReference type="PIR" id="A48983">
    <property type="entry name" value="A48983"/>
</dbReference>
<dbReference type="SMR" id="Q35639"/>
<dbReference type="GO" id="GO:0005743">
    <property type="term" value="C:mitochondrial inner membrane"/>
    <property type="evidence" value="ECO:0007669"/>
    <property type="project" value="UniProtKB-SubCell"/>
</dbReference>
<dbReference type="GO" id="GO:0009536">
    <property type="term" value="C:plastid"/>
    <property type="evidence" value="ECO:0007669"/>
    <property type="project" value="UniProtKB-ARBA"/>
</dbReference>
<dbReference type="GO" id="GO:0008137">
    <property type="term" value="F:NADH dehydrogenase (ubiquinone) activity"/>
    <property type="evidence" value="ECO:0007669"/>
    <property type="project" value="UniProtKB-EC"/>
</dbReference>
<dbReference type="GO" id="GO:0042773">
    <property type="term" value="P:ATP synthesis coupled electron transport"/>
    <property type="evidence" value="ECO:0007669"/>
    <property type="project" value="InterPro"/>
</dbReference>
<dbReference type="GO" id="GO:0015990">
    <property type="term" value="P:electron transport coupled proton transport"/>
    <property type="evidence" value="ECO:0007669"/>
    <property type="project" value="TreeGrafter"/>
</dbReference>
<dbReference type="InterPro" id="IPR001750">
    <property type="entry name" value="ND/Mrp_TM"/>
</dbReference>
<dbReference type="InterPro" id="IPR003945">
    <property type="entry name" value="NU5C-like"/>
</dbReference>
<dbReference type="PANTHER" id="PTHR42829">
    <property type="entry name" value="NADH-UBIQUINONE OXIDOREDUCTASE CHAIN 5"/>
    <property type="match status" value="1"/>
</dbReference>
<dbReference type="PANTHER" id="PTHR42829:SF2">
    <property type="entry name" value="NADH-UBIQUINONE OXIDOREDUCTASE CHAIN 5"/>
    <property type="match status" value="1"/>
</dbReference>
<dbReference type="Pfam" id="PF00361">
    <property type="entry name" value="Proton_antipo_M"/>
    <property type="match status" value="1"/>
</dbReference>
<dbReference type="PRINTS" id="PR01434">
    <property type="entry name" value="NADHDHGNASE5"/>
</dbReference>
<name>NU5M_PEA</name>
<keyword id="KW-0249">Electron transport</keyword>
<keyword id="KW-0472">Membrane</keyword>
<keyword id="KW-0496">Mitochondrion</keyword>
<keyword id="KW-0999">Mitochondrion inner membrane</keyword>
<keyword id="KW-0520">NAD</keyword>
<keyword id="KW-0679">Respiratory chain</keyword>
<keyword id="KW-1278">Translocase</keyword>
<keyword id="KW-0812">Transmembrane</keyword>
<keyword id="KW-1133">Transmembrane helix</keyword>
<keyword id="KW-0813">Transport</keyword>
<keyword id="KW-0830">Ubiquinone</keyword>
<geneLocation type="mitochondrion"/>
<evidence type="ECO:0000250" key="1"/>
<evidence type="ECO:0000255" key="2"/>
<evidence type="ECO:0000305" key="3"/>
<organism>
    <name type="scientific">Pisum sativum</name>
    <name type="common">Garden pea</name>
    <name type="synonym">Lathyrus oleraceus</name>
    <dbReference type="NCBI Taxonomy" id="3888"/>
    <lineage>
        <taxon>Eukaryota</taxon>
        <taxon>Viridiplantae</taxon>
        <taxon>Streptophyta</taxon>
        <taxon>Embryophyta</taxon>
        <taxon>Tracheophyta</taxon>
        <taxon>Spermatophyta</taxon>
        <taxon>Magnoliopsida</taxon>
        <taxon>eudicotyledons</taxon>
        <taxon>Gunneridae</taxon>
        <taxon>Pentapetalae</taxon>
        <taxon>rosids</taxon>
        <taxon>fabids</taxon>
        <taxon>Fabales</taxon>
        <taxon>Fabaceae</taxon>
        <taxon>Papilionoideae</taxon>
        <taxon>50 kb inversion clade</taxon>
        <taxon>NPAAA clade</taxon>
        <taxon>Hologalegina</taxon>
        <taxon>IRL clade</taxon>
        <taxon>Fabeae</taxon>
        <taxon>Pisum</taxon>
    </lineage>
</organism>